<reference key="1">
    <citation type="journal article" date="2008" name="Infect. Immun.">
        <title>Genomic comparison of virulent Rickettsia rickettsii Sheila Smith and avirulent Rickettsia rickettsii Iowa.</title>
        <authorList>
            <person name="Ellison D.W."/>
            <person name="Clark T.R."/>
            <person name="Sturdevant D.E."/>
            <person name="Virtaneva K."/>
            <person name="Porcella S.F."/>
            <person name="Hackstadt T."/>
        </authorList>
    </citation>
    <scope>NUCLEOTIDE SEQUENCE [LARGE SCALE GENOMIC DNA]</scope>
    <source>
        <strain>Iowa</strain>
    </source>
</reference>
<protein>
    <recommendedName>
        <fullName evidence="1">Proline--tRNA ligase</fullName>
        <ecNumber evidence="1">6.1.1.15</ecNumber>
    </recommendedName>
    <alternativeName>
        <fullName evidence="1">Prolyl-tRNA synthetase</fullName>
        <shortName evidence="1">ProRS</shortName>
    </alternativeName>
</protein>
<proteinExistence type="inferred from homology"/>
<accession>B0BXB9</accession>
<name>SYP_RICRO</name>
<feature type="chain" id="PRO_1000087865" description="Proline--tRNA ligase">
    <location>
        <begin position="1"/>
        <end position="426"/>
    </location>
</feature>
<gene>
    <name evidence="1" type="primary">proS</name>
    <name type="ordered locus">RrIowa_0631</name>
</gene>
<keyword id="KW-0030">Aminoacyl-tRNA synthetase</keyword>
<keyword id="KW-0067">ATP-binding</keyword>
<keyword id="KW-0963">Cytoplasm</keyword>
<keyword id="KW-0436">Ligase</keyword>
<keyword id="KW-0547">Nucleotide-binding</keyword>
<keyword id="KW-0648">Protein biosynthesis</keyword>
<comment type="function">
    <text evidence="1">Catalyzes the attachment of proline to tRNA(Pro) in a two-step reaction: proline is first activated by ATP to form Pro-AMP and then transferred to the acceptor end of tRNA(Pro).</text>
</comment>
<comment type="catalytic activity">
    <reaction evidence="1">
        <text>tRNA(Pro) + L-proline + ATP = L-prolyl-tRNA(Pro) + AMP + diphosphate</text>
        <dbReference type="Rhea" id="RHEA:14305"/>
        <dbReference type="Rhea" id="RHEA-COMP:9700"/>
        <dbReference type="Rhea" id="RHEA-COMP:9702"/>
        <dbReference type="ChEBI" id="CHEBI:30616"/>
        <dbReference type="ChEBI" id="CHEBI:33019"/>
        <dbReference type="ChEBI" id="CHEBI:60039"/>
        <dbReference type="ChEBI" id="CHEBI:78442"/>
        <dbReference type="ChEBI" id="CHEBI:78532"/>
        <dbReference type="ChEBI" id="CHEBI:456215"/>
        <dbReference type="EC" id="6.1.1.15"/>
    </reaction>
</comment>
<comment type="subunit">
    <text evidence="1">Homodimer.</text>
</comment>
<comment type="subcellular location">
    <subcellularLocation>
        <location evidence="1">Cytoplasm</location>
    </subcellularLocation>
</comment>
<comment type="similarity">
    <text evidence="1">Belongs to the class-II aminoacyl-tRNA synthetase family. ProS type 2 subfamily.</text>
</comment>
<sequence>MLLSKYFLPVLKEEPSEAQVTSHKLMLRSGMIRQQAAGIYTWLPLGLKVLKNIENIVRLNMNKAGALEVLMPCIQPAHLWMESGRFDNYGKEMLKFQDRHDNTLLFGPTNEDMITDIFRHNIKSYKDLPKNLYHIQWKFRDEIRPRFGVMRGREFLMKDAYSFDINEENAVKTYNQMYKAYINAFRDLGVFAIPVIADNGPIGGNLSHEFHIIAETGESTIYYDKKFKILKDNPDIDVEEIKSWYAAAEEKYEVNKLPISEQEITSSKGIEVGHIFYIGSKYSVNMNALINDEYGKLTPIEMSSYGIGISRLVAAIIEANCDEKGIIWPSSVAPFKVSLINLNIHDSKCVELAEMAYKELSDKNIEVLYDDTEARPGSKFATHDLIGSPHQIIIGPKKAANNIVELKDRKSGVIEDIEVGSLMSVL</sequence>
<evidence type="ECO:0000255" key="1">
    <source>
        <dbReference type="HAMAP-Rule" id="MF_01570"/>
    </source>
</evidence>
<organism>
    <name type="scientific">Rickettsia rickettsii (strain Iowa)</name>
    <dbReference type="NCBI Taxonomy" id="452659"/>
    <lineage>
        <taxon>Bacteria</taxon>
        <taxon>Pseudomonadati</taxon>
        <taxon>Pseudomonadota</taxon>
        <taxon>Alphaproteobacteria</taxon>
        <taxon>Rickettsiales</taxon>
        <taxon>Rickettsiaceae</taxon>
        <taxon>Rickettsieae</taxon>
        <taxon>Rickettsia</taxon>
        <taxon>spotted fever group</taxon>
    </lineage>
</organism>
<dbReference type="EC" id="6.1.1.15" evidence="1"/>
<dbReference type="EMBL" id="CP000766">
    <property type="protein sequence ID" value="ABY72495.1"/>
    <property type="molecule type" value="Genomic_DNA"/>
</dbReference>
<dbReference type="RefSeq" id="WP_012150726.1">
    <property type="nucleotide sequence ID" value="NC_010263.3"/>
</dbReference>
<dbReference type="SMR" id="B0BXB9"/>
<dbReference type="GeneID" id="79937284"/>
<dbReference type="KEGG" id="rrj:RrIowa_0631"/>
<dbReference type="eggNOG" id="COG0442">
    <property type="taxonomic scope" value="Bacteria"/>
</dbReference>
<dbReference type="HOGENOM" id="CLU_016739_4_2_5"/>
<dbReference type="Proteomes" id="UP000000796">
    <property type="component" value="Chromosome"/>
</dbReference>
<dbReference type="GO" id="GO:0005829">
    <property type="term" value="C:cytosol"/>
    <property type="evidence" value="ECO:0007669"/>
    <property type="project" value="TreeGrafter"/>
</dbReference>
<dbReference type="GO" id="GO:0005524">
    <property type="term" value="F:ATP binding"/>
    <property type="evidence" value="ECO:0007669"/>
    <property type="project" value="UniProtKB-UniRule"/>
</dbReference>
<dbReference type="GO" id="GO:0004827">
    <property type="term" value="F:proline-tRNA ligase activity"/>
    <property type="evidence" value="ECO:0007669"/>
    <property type="project" value="UniProtKB-UniRule"/>
</dbReference>
<dbReference type="GO" id="GO:0006433">
    <property type="term" value="P:prolyl-tRNA aminoacylation"/>
    <property type="evidence" value="ECO:0007669"/>
    <property type="project" value="UniProtKB-UniRule"/>
</dbReference>
<dbReference type="CDD" id="cd00861">
    <property type="entry name" value="ProRS_anticodon_short"/>
    <property type="match status" value="1"/>
</dbReference>
<dbReference type="CDD" id="cd00779">
    <property type="entry name" value="ProRS_core_prok"/>
    <property type="match status" value="1"/>
</dbReference>
<dbReference type="FunFam" id="3.30.930.10:FF:000042">
    <property type="entry name" value="probable proline--tRNA ligase, mitochondrial"/>
    <property type="match status" value="1"/>
</dbReference>
<dbReference type="FunFam" id="3.40.50.800:FF:000032">
    <property type="entry name" value="Proline--tRNA ligase"/>
    <property type="match status" value="1"/>
</dbReference>
<dbReference type="Gene3D" id="3.40.50.800">
    <property type="entry name" value="Anticodon-binding domain"/>
    <property type="match status" value="1"/>
</dbReference>
<dbReference type="Gene3D" id="3.30.930.10">
    <property type="entry name" value="Bira Bifunctional Protein, Domain 2"/>
    <property type="match status" value="1"/>
</dbReference>
<dbReference type="HAMAP" id="MF_01570">
    <property type="entry name" value="Pro_tRNA_synth_type2"/>
    <property type="match status" value="1"/>
</dbReference>
<dbReference type="InterPro" id="IPR002314">
    <property type="entry name" value="aa-tRNA-synt_IIb"/>
</dbReference>
<dbReference type="InterPro" id="IPR006195">
    <property type="entry name" value="aa-tRNA-synth_II"/>
</dbReference>
<dbReference type="InterPro" id="IPR045864">
    <property type="entry name" value="aa-tRNA-synth_II/BPL/LPL"/>
</dbReference>
<dbReference type="InterPro" id="IPR004154">
    <property type="entry name" value="Anticodon-bd"/>
</dbReference>
<dbReference type="InterPro" id="IPR036621">
    <property type="entry name" value="Anticodon-bd_dom_sf"/>
</dbReference>
<dbReference type="InterPro" id="IPR002316">
    <property type="entry name" value="Pro-tRNA-ligase_IIa"/>
</dbReference>
<dbReference type="InterPro" id="IPR004500">
    <property type="entry name" value="Pro-tRNA-synth_IIa_bac-type"/>
</dbReference>
<dbReference type="InterPro" id="IPR050062">
    <property type="entry name" value="Pro-tRNA_synthetase"/>
</dbReference>
<dbReference type="InterPro" id="IPR023716">
    <property type="entry name" value="Prolyl-tRNA_ligase_IIa_type2"/>
</dbReference>
<dbReference type="InterPro" id="IPR044140">
    <property type="entry name" value="ProRS_anticodon_short"/>
</dbReference>
<dbReference type="InterPro" id="IPR033730">
    <property type="entry name" value="ProRS_core_prok"/>
</dbReference>
<dbReference type="NCBIfam" id="NF008979">
    <property type="entry name" value="PRK12325.1"/>
    <property type="match status" value="1"/>
</dbReference>
<dbReference type="NCBIfam" id="TIGR00409">
    <property type="entry name" value="proS_fam_II"/>
    <property type="match status" value="1"/>
</dbReference>
<dbReference type="PANTHER" id="PTHR42753">
    <property type="entry name" value="MITOCHONDRIAL RIBOSOME PROTEIN L39/PROLYL-TRNA LIGASE FAMILY MEMBER"/>
    <property type="match status" value="1"/>
</dbReference>
<dbReference type="PANTHER" id="PTHR42753:SF2">
    <property type="entry name" value="PROLINE--TRNA LIGASE"/>
    <property type="match status" value="1"/>
</dbReference>
<dbReference type="Pfam" id="PF03129">
    <property type="entry name" value="HGTP_anticodon"/>
    <property type="match status" value="1"/>
</dbReference>
<dbReference type="Pfam" id="PF00587">
    <property type="entry name" value="tRNA-synt_2b"/>
    <property type="match status" value="1"/>
</dbReference>
<dbReference type="PRINTS" id="PR01046">
    <property type="entry name" value="TRNASYNTHPRO"/>
</dbReference>
<dbReference type="SUPFAM" id="SSF52954">
    <property type="entry name" value="Class II aaRS ABD-related"/>
    <property type="match status" value="1"/>
</dbReference>
<dbReference type="SUPFAM" id="SSF55681">
    <property type="entry name" value="Class II aaRS and biotin synthetases"/>
    <property type="match status" value="1"/>
</dbReference>
<dbReference type="PROSITE" id="PS50862">
    <property type="entry name" value="AA_TRNA_LIGASE_II"/>
    <property type="match status" value="1"/>
</dbReference>